<protein>
    <recommendedName>
        <fullName evidence="1">Glutamine--tRNA ligase</fullName>
        <ecNumber evidence="1">6.1.1.18</ecNumber>
    </recommendedName>
    <alternativeName>
        <fullName evidence="1">Glutaminyl-tRNA synthetase</fullName>
        <shortName evidence="1">GlnRS</shortName>
    </alternativeName>
</protein>
<dbReference type="EC" id="6.1.1.18" evidence="1"/>
<dbReference type="EMBL" id="AM167904">
    <property type="protein sequence ID" value="CAJ50398.1"/>
    <property type="molecule type" value="Genomic_DNA"/>
</dbReference>
<dbReference type="RefSeq" id="WP_012418429.1">
    <property type="nucleotide sequence ID" value="NC_010645.1"/>
</dbReference>
<dbReference type="SMR" id="Q2KVX0"/>
<dbReference type="STRING" id="360910.BAV2787"/>
<dbReference type="GeneID" id="92933965"/>
<dbReference type="KEGG" id="bav:BAV2787"/>
<dbReference type="eggNOG" id="COG0008">
    <property type="taxonomic scope" value="Bacteria"/>
</dbReference>
<dbReference type="HOGENOM" id="CLU_001882_2_3_4"/>
<dbReference type="OrthoDB" id="9801560at2"/>
<dbReference type="Proteomes" id="UP000001977">
    <property type="component" value="Chromosome"/>
</dbReference>
<dbReference type="GO" id="GO:0005829">
    <property type="term" value="C:cytosol"/>
    <property type="evidence" value="ECO:0007669"/>
    <property type="project" value="TreeGrafter"/>
</dbReference>
<dbReference type="GO" id="GO:0005524">
    <property type="term" value="F:ATP binding"/>
    <property type="evidence" value="ECO:0007669"/>
    <property type="project" value="UniProtKB-UniRule"/>
</dbReference>
<dbReference type="GO" id="GO:0004819">
    <property type="term" value="F:glutamine-tRNA ligase activity"/>
    <property type="evidence" value="ECO:0007669"/>
    <property type="project" value="UniProtKB-UniRule"/>
</dbReference>
<dbReference type="GO" id="GO:0006425">
    <property type="term" value="P:glutaminyl-tRNA aminoacylation"/>
    <property type="evidence" value="ECO:0007669"/>
    <property type="project" value="InterPro"/>
</dbReference>
<dbReference type="GO" id="GO:0006424">
    <property type="term" value="P:glutamyl-tRNA aminoacylation"/>
    <property type="evidence" value="ECO:0007669"/>
    <property type="project" value="UniProtKB-UniRule"/>
</dbReference>
<dbReference type="FunFam" id="1.10.1160.10:FF:000001">
    <property type="entry name" value="Glutamine--tRNA ligase"/>
    <property type="match status" value="1"/>
</dbReference>
<dbReference type="FunFam" id="2.40.240.10:FF:000007">
    <property type="entry name" value="Glutamine--tRNA ligase"/>
    <property type="match status" value="1"/>
</dbReference>
<dbReference type="FunFam" id="3.90.800.10:FF:000001">
    <property type="entry name" value="Glutamine--tRNA ligase"/>
    <property type="match status" value="1"/>
</dbReference>
<dbReference type="FunFam" id="3.40.50.620:FF:000037">
    <property type="entry name" value="Glutamine--tRNA ligase cytoplasmic"/>
    <property type="match status" value="1"/>
</dbReference>
<dbReference type="Gene3D" id="1.10.1160.10">
    <property type="entry name" value="Glutamyl-trna Synthetase, Domain 2"/>
    <property type="match status" value="1"/>
</dbReference>
<dbReference type="Gene3D" id="3.90.800.10">
    <property type="entry name" value="Glutamyl-tRNA Synthetase, Domain 3"/>
    <property type="match status" value="1"/>
</dbReference>
<dbReference type="Gene3D" id="3.40.50.620">
    <property type="entry name" value="HUPs"/>
    <property type="match status" value="1"/>
</dbReference>
<dbReference type="Gene3D" id="2.40.240.10">
    <property type="entry name" value="Ribosomal Protein L25, Chain P"/>
    <property type="match status" value="2"/>
</dbReference>
<dbReference type="HAMAP" id="MF_00126">
    <property type="entry name" value="Gln_tRNA_synth"/>
    <property type="match status" value="1"/>
</dbReference>
<dbReference type="InterPro" id="IPR001412">
    <property type="entry name" value="aa-tRNA-synth_I_CS"/>
</dbReference>
<dbReference type="InterPro" id="IPR004514">
    <property type="entry name" value="Gln-tRNA-synth"/>
</dbReference>
<dbReference type="InterPro" id="IPR050132">
    <property type="entry name" value="Gln/Glu-tRNA_Ligase"/>
</dbReference>
<dbReference type="InterPro" id="IPR022861">
    <property type="entry name" value="Gln_tRNA_ligase_bac"/>
</dbReference>
<dbReference type="InterPro" id="IPR000924">
    <property type="entry name" value="Glu/Gln-tRNA-synth"/>
</dbReference>
<dbReference type="InterPro" id="IPR020058">
    <property type="entry name" value="Glu/Gln-tRNA-synth_Ib_cat-dom"/>
</dbReference>
<dbReference type="InterPro" id="IPR020059">
    <property type="entry name" value="Glu/Gln-tRNA-synth_Ib_codon-bd"/>
</dbReference>
<dbReference type="InterPro" id="IPR020061">
    <property type="entry name" value="Glu_tRNA_lig_a-bdl"/>
</dbReference>
<dbReference type="InterPro" id="IPR020056">
    <property type="entry name" value="Rbsml_bL25/Gln-tRNA_synth_N"/>
</dbReference>
<dbReference type="InterPro" id="IPR011035">
    <property type="entry name" value="Ribosomal_bL25/Gln-tRNA_synth"/>
</dbReference>
<dbReference type="InterPro" id="IPR014729">
    <property type="entry name" value="Rossmann-like_a/b/a_fold"/>
</dbReference>
<dbReference type="InterPro" id="IPR049437">
    <property type="entry name" value="tRNA-synt_1c_C2"/>
</dbReference>
<dbReference type="NCBIfam" id="TIGR00440">
    <property type="entry name" value="glnS"/>
    <property type="match status" value="1"/>
</dbReference>
<dbReference type="NCBIfam" id="NF011291">
    <property type="entry name" value="PRK14703.1"/>
    <property type="match status" value="1"/>
</dbReference>
<dbReference type="PANTHER" id="PTHR43097:SF5">
    <property type="entry name" value="GLUTAMATE--TRNA LIGASE"/>
    <property type="match status" value="1"/>
</dbReference>
<dbReference type="PANTHER" id="PTHR43097">
    <property type="entry name" value="GLUTAMINE-TRNA LIGASE"/>
    <property type="match status" value="1"/>
</dbReference>
<dbReference type="Pfam" id="PF00749">
    <property type="entry name" value="tRNA-synt_1c"/>
    <property type="match status" value="1"/>
</dbReference>
<dbReference type="Pfam" id="PF03950">
    <property type="entry name" value="tRNA-synt_1c_C"/>
    <property type="match status" value="1"/>
</dbReference>
<dbReference type="Pfam" id="PF20974">
    <property type="entry name" value="tRNA-synt_1c_C2"/>
    <property type="match status" value="1"/>
</dbReference>
<dbReference type="PRINTS" id="PR00987">
    <property type="entry name" value="TRNASYNTHGLU"/>
</dbReference>
<dbReference type="SUPFAM" id="SSF52374">
    <property type="entry name" value="Nucleotidylyl transferase"/>
    <property type="match status" value="1"/>
</dbReference>
<dbReference type="SUPFAM" id="SSF50715">
    <property type="entry name" value="Ribosomal protein L25-like"/>
    <property type="match status" value="1"/>
</dbReference>
<dbReference type="PROSITE" id="PS00178">
    <property type="entry name" value="AA_TRNA_LIGASE_I"/>
    <property type="match status" value="1"/>
</dbReference>
<organism>
    <name type="scientific">Bordetella avium (strain 197N)</name>
    <dbReference type="NCBI Taxonomy" id="360910"/>
    <lineage>
        <taxon>Bacteria</taxon>
        <taxon>Pseudomonadati</taxon>
        <taxon>Pseudomonadota</taxon>
        <taxon>Betaproteobacteria</taxon>
        <taxon>Burkholderiales</taxon>
        <taxon>Alcaligenaceae</taxon>
        <taxon>Bordetella</taxon>
    </lineage>
</organism>
<gene>
    <name evidence="1" type="primary">glnS</name>
    <name type="ordered locus">BAV2787</name>
</gene>
<proteinExistence type="inferred from homology"/>
<name>SYQ_BORA1</name>
<evidence type="ECO:0000255" key="1">
    <source>
        <dbReference type="HAMAP-Rule" id="MF_00126"/>
    </source>
</evidence>
<accession>Q2KVX0</accession>
<sequence length="586" mass="66544">MTQTTAPHAASNYLRNIIEDDLAANRFQGKRWAGKPGPASMQASGLPDPARIRTRFPPEPNGYLHIGHAKSICVNFGIAKEFGGVCHLRFDDTNPEKEDQEYVDAIIEAVRWLGFDWNTDGNNNLYFASDYFEFMYEFAEALIEAGHAFVDEQSADDIRAQRGTLTEPGRNSPFRDRPAAESLTRLREMRDGKHPDGSLVLRARIDMASPNINLRDPVMYRVRHAAHHRTGDKWCIYPMYSWAHPVEDALEGITHSICTLEFEDQRPFYDWILARLADLGKLARPLPRQYEFSRLNMSYIVTSKRKLLQLVREGYVDGWDDPRMPTLFGLRRRGYTASAIRLFCDRTAVSKSDSRIDYSLLEQAVRDDLDPGTTRSVAVLDPLKLVITNYPKDQTEVCKAPRNPHDPEAGQREFPFSRELWIERDDFREEAPKKYFRLFPGNLVRLKYGYVVRCTGFTKDEAGNITEVQAEYLPDTKSGTPGADSVKVKGNITWVSAAHAVPAEVRLYDRLFADPHPDGGDKDFLACLNPNSIQTVQAWLEPGTRAEPGATWQFERLGYFTVDSKDSSPEAPVLNRIVTLKDSWAA</sequence>
<keyword id="KW-0030">Aminoacyl-tRNA synthetase</keyword>
<keyword id="KW-0067">ATP-binding</keyword>
<keyword id="KW-0963">Cytoplasm</keyword>
<keyword id="KW-0436">Ligase</keyword>
<keyword id="KW-0547">Nucleotide-binding</keyword>
<keyword id="KW-0648">Protein biosynthesis</keyword>
<keyword id="KW-1185">Reference proteome</keyword>
<comment type="catalytic activity">
    <reaction evidence="1">
        <text>tRNA(Gln) + L-glutamine + ATP = L-glutaminyl-tRNA(Gln) + AMP + diphosphate</text>
        <dbReference type="Rhea" id="RHEA:20121"/>
        <dbReference type="Rhea" id="RHEA-COMP:9662"/>
        <dbReference type="Rhea" id="RHEA-COMP:9681"/>
        <dbReference type="ChEBI" id="CHEBI:30616"/>
        <dbReference type="ChEBI" id="CHEBI:33019"/>
        <dbReference type="ChEBI" id="CHEBI:58359"/>
        <dbReference type="ChEBI" id="CHEBI:78442"/>
        <dbReference type="ChEBI" id="CHEBI:78521"/>
        <dbReference type="ChEBI" id="CHEBI:456215"/>
        <dbReference type="EC" id="6.1.1.18"/>
    </reaction>
</comment>
<comment type="subunit">
    <text evidence="1">Monomer.</text>
</comment>
<comment type="subcellular location">
    <subcellularLocation>
        <location evidence="1">Cytoplasm</location>
    </subcellularLocation>
</comment>
<comment type="similarity">
    <text evidence="1">Belongs to the class-I aminoacyl-tRNA synthetase family.</text>
</comment>
<feature type="chain" id="PRO_1000095478" description="Glutamine--tRNA ligase">
    <location>
        <begin position="1"/>
        <end position="586"/>
    </location>
</feature>
<feature type="short sequence motif" description="'HIGH' region" evidence="1">
    <location>
        <begin position="58"/>
        <end position="68"/>
    </location>
</feature>
<feature type="short sequence motif" description="'KMSKS' region" evidence="1">
    <location>
        <begin position="301"/>
        <end position="305"/>
    </location>
</feature>
<feature type="binding site" evidence="1">
    <location>
        <begin position="59"/>
        <end position="61"/>
    </location>
    <ligand>
        <name>ATP</name>
        <dbReference type="ChEBI" id="CHEBI:30616"/>
    </ligand>
</feature>
<feature type="binding site" evidence="1">
    <location>
        <begin position="65"/>
        <end position="71"/>
    </location>
    <ligand>
        <name>ATP</name>
        <dbReference type="ChEBI" id="CHEBI:30616"/>
    </ligand>
</feature>
<feature type="binding site" evidence="1">
    <location>
        <position position="91"/>
    </location>
    <ligand>
        <name>L-glutamine</name>
        <dbReference type="ChEBI" id="CHEBI:58359"/>
    </ligand>
</feature>
<feature type="binding site" evidence="1">
    <location>
        <position position="240"/>
    </location>
    <ligand>
        <name>L-glutamine</name>
        <dbReference type="ChEBI" id="CHEBI:58359"/>
    </ligand>
</feature>
<feature type="binding site" evidence="1">
    <location>
        <position position="259"/>
    </location>
    <ligand>
        <name>ATP</name>
        <dbReference type="ChEBI" id="CHEBI:30616"/>
    </ligand>
</feature>
<feature type="binding site" evidence="1">
    <location>
        <begin position="294"/>
        <end position="295"/>
    </location>
    <ligand>
        <name>ATP</name>
        <dbReference type="ChEBI" id="CHEBI:30616"/>
    </ligand>
</feature>
<reference key="1">
    <citation type="journal article" date="2006" name="J. Bacteriol.">
        <title>Comparison of the genome sequence of the poultry pathogen Bordetella avium with those of B. bronchiseptica, B. pertussis, and B. parapertussis reveals extensive diversity in surface structures associated with host interaction.</title>
        <authorList>
            <person name="Sebaihia M."/>
            <person name="Preston A."/>
            <person name="Maskell D.J."/>
            <person name="Kuzmiak H."/>
            <person name="Connell T.D."/>
            <person name="King N.D."/>
            <person name="Orndorff P.E."/>
            <person name="Miyamoto D.M."/>
            <person name="Thomson N.R."/>
            <person name="Harris D."/>
            <person name="Goble A."/>
            <person name="Lord A."/>
            <person name="Murphy L."/>
            <person name="Quail M.A."/>
            <person name="Rutter S."/>
            <person name="Squares R."/>
            <person name="Squares S."/>
            <person name="Woodward J."/>
            <person name="Parkhill J."/>
            <person name="Temple L.M."/>
        </authorList>
    </citation>
    <scope>NUCLEOTIDE SEQUENCE [LARGE SCALE GENOMIC DNA]</scope>
    <source>
        <strain>197N</strain>
    </source>
</reference>